<protein>
    <recommendedName>
        <fullName>Protein V2</fullName>
    </recommendedName>
    <alternativeName>
        <fullName>12.1 kDa protein</fullName>
    </alternativeName>
</protein>
<keyword id="KW-1185">Reference proteome</keyword>
<dbReference type="EMBL" id="M24597">
    <property type="protein sequence ID" value="AAA42752.1"/>
    <property type="molecule type" value="Genomic_DNA"/>
</dbReference>
<dbReference type="EMBL" id="AF379637">
    <property type="protein sequence ID" value="AAK59257.1"/>
    <property type="molecule type" value="Genomic_DNA"/>
</dbReference>
<dbReference type="PIR" id="S28361">
    <property type="entry name" value="S28361"/>
</dbReference>
<dbReference type="RefSeq" id="NP_040558.1">
    <property type="nucleotide sequence ID" value="NC_001412.1"/>
</dbReference>
<dbReference type="SMR" id="Q77HP2"/>
<dbReference type="KEGG" id="vg:2546432"/>
<dbReference type="Proteomes" id="UP000006542">
    <property type="component" value="Genome"/>
</dbReference>
<dbReference type="InterPro" id="IPR009931">
    <property type="entry name" value="Curto_V2"/>
</dbReference>
<dbReference type="Pfam" id="PF07325">
    <property type="entry name" value="Curto_V2"/>
    <property type="match status" value="1"/>
</dbReference>
<organism>
    <name type="scientific">Beet curly top virus (strain California/Logan)</name>
    <name type="common">BCTV</name>
    <dbReference type="NCBI Taxonomy" id="268960"/>
    <lineage>
        <taxon>Viruses</taxon>
        <taxon>Monodnaviria</taxon>
        <taxon>Shotokuvirae</taxon>
        <taxon>Cressdnaviricota</taxon>
        <taxon>Repensiviricetes</taxon>
        <taxon>Geplafuvirales</taxon>
        <taxon>Geminiviridae</taxon>
        <taxon>Curtovirus</taxon>
        <taxon>Beet curly top virus</taxon>
    </lineage>
</organism>
<gene>
    <name type="ORF">V2</name>
</gene>
<sequence>MGPFRVDQFPDNYPAFLAVSTSCFLRYNRWCILGIHQEIGSLTLEEGEVFRQFQKEVKKLLRCKVNFHRKCSLYEEIYKKYVYNVPEKKGESSKCVAEEEED</sequence>
<name>V2_BCTVC</name>
<comment type="function">
    <text>May be involved in the regulation of ssDNA versus dsDNA levels.</text>
</comment>
<proteinExistence type="predicted"/>
<accession>Q77HP2</accession>
<accession>Q96633</accession>
<organismHost>
    <name type="scientific">Beta vulgaris</name>
    <name type="common">Sugar beet</name>
    <dbReference type="NCBI Taxonomy" id="161934"/>
</organismHost>
<organismHost>
    <name type="scientific">Capsicum</name>
    <name type="common">peppers</name>
    <dbReference type="NCBI Taxonomy" id="4071"/>
</organismHost>
<organismHost>
    <name type="scientific">Cucurbitaceae</name>
    <dbReference type="NCBI Taxonomy" id="3650"/>
</organismHost>
<organismHost>
    <name type="scientific">Linum</name>
    <dbReference type="NCBI Taxonomy" id="4005"/>
</organismHost>
<organismHost>
    <name type="scientific">Phaseolus vulgaris</name>
    <name type="common">Kidney bean</name>
    <name type="synonym">French bean</name>
    <dbReference type="NCBI Taxonomy" id="3885"/>
</organismHost>
<organismHost>
    <name type="scientific">Solanum lycopersicum</name>
    <name type="common">Tomato</name>
    <name type="synonym">Lycopersicon esculentum</name>
    <dbReference type="NCBI Taxonomy" id="4081"/>
</organismHost>
<organismHost>
    <name type="scientific">Solanum tuberosum</name>
    <name type="common">Potato</name>
    <dbReference type="NCBI Taxonomy" id="4113"/>
</organismHost>
<organismHost>
    <name type="scientific">Spinacia oleracea</name>
    <name type="common">Spinach</name>
    <dbReference type="NCBI Taxonomy" id="3562"/>
</organismHost>
<feature type="chain" id="PRO_0000323703" description="Protein V2">
    <location>
        <begin position="1"/>
        <end position="102"/>
    </location>
</feature>
<reference key="1">
    <citation type="journal article" date="1986" name="EMBO J.">
        <title>The nucleotide sequence of an infectious clone of the geminivirus beet curly top virus.</title>
        <authorList>
            <person name="Stanley J."/>
            <person name="Markham P.G."/>
            <person name="Callis R.J."/>
            <person name="Pinner M.S."/>
        </authorList>
    </citation>
    <scope>NUCLEOTIDE SEQUENCE [GENOMIC DNA]</scope>
    <source>
        <strain>Infectious clone pBCT028</strain>
    </source>
</reference>
<reference key="2">
    <citation type="submission" date="2001-05" db="EMBL/GenBank/DDBJ databases">
        <authorList>
            <person name="Bisaro D.M."/>
            <person name="Hormuzdi S.G."/>
        </authorList>
    </citation>
    <scope>NUCLEOTIDE SEQUENCE [GENOMIC DNA]</scope>
</reference>
<reference key="3">
    <citation type="journal article" date="1993" name="Virology">
        <title>Genetic analysis of beet curly top virus: evidence for three virion sense genes involved in movement and regulation of single- and double-stranded DNA levels.</title>
        <authorList>
            <person name="Hormuzdi S.G."/>
            <person name="Bisaro D.M."/>
        </authorList>
    </citation>
    <scope>IDENTIFICATION</scope>
</reference>